<dbReference type="EMBL" id="AC005967">
    <property type="status" value="NOT_ANNOTATED_CDS"/>
    <property type="molecule type" value="Genomic_DNA"/>
</dbReference>
<dbReference type="EMBL" id="CP002685">
    <property type="protein sequence ID" value="ANM62754.1"/>
    <property type="molecule type" value="Genomic_DNA"/>
</dbReference>
<dbReference type="RefSeq" id="NP_001324887.1">
    <property type="nucleotide sequence ID" value="NM_001335923.1"/>
</dbReference>
<dbReference type="SMR" id="A0A1P8B1G7"/>
<dbReference type="EnsemblPlants" id="AT2G24195.1">
    <property type="protein sequence ID" value="AT2G24195.1"/>
    <property type="gene ID" value="AT2G24195"/>
</dbReference>
<dbReference type="GeneID" id="28718298"/>
<dbReference type="Gramene" id="AT2G24195.1">
    <property type="protein sequence ID" value="AT2G24195.1"/>
    <property type="gene ID" value="AT2G24195"/>
</dbReference>
<dbReference type="KEGG" id="ath:AT2G24195"/>
<dbReference type="Araport" id="AT2G24195"/>
<dbReference type="TAIR" id="AT2G24195"/>
<dbReference type="InParanoid" id="A0A1P8B1G7"/>
<dbReference type="OrthoDB" id="1095936at2759"/>
<dbReference type="PRO" id="PR:A0A1P8B1G7"/>
<dbReference type="Proteomes" id="UP000006548">
    <property type="component" value="Chromosome 2"/>
</dbReference>
<dbReference type="ExpressionAtlas" id="A0A1P8B1G7">
    <property type="expression patterns" value="baseline and differential"/>
</dbReference>
<dbReference type="GO" id="GO:0048046">
    <property type="term" value="C:apoplast"/>
    <property type="evidence" value="ECO:0000250"/>
    <property type="project" value="UniProtKB"/>
</dbReference>
<dbReference type="GO" id="GO:0005886">
    <property type="term" value="C:plasma membrane"/>
    <property type="evidence" value="ECO:0007669"/>
    <property type="project" value="UniProtKB-SubCell"/>
</dbReference>
<dbReference type="GO" id="GO:0030275">
    <property type="term" value="F:LRR domain binding"/>
    <property type="evidence" value="ECO:0000250"/>
    <property type="project" value="UniProtKB"/>
</dbReference>
<dbReference type="GO" id="GO:0033612">
    <property type="term" value="F:receptor serine/threonine kinase binding"/>
    <property type="evidence" value="ECO:0000250"/>
    <property type="project" value="UniProtKB"/>
</dbReference>
<accession>A0A1P8B1G7</accession>
<protein>
    <recommendedName>
        <fullName evidence="3">Serine rich endogenous peptide 21</fullName>
        <shortName evidence="3">AtSCOOP21</shortName>
    </recommendedName>
    <alternativeName>
        <fullName evidence="3">Phytocytokine SCOOP21</fullName>
    </alternativeName>
    <alternativeName>
        <fullName evidence="3">Precursor of serine rich endogenous peptide phytocytokine 21</fullName>
    </alternativeName>
</protein>
<sequence length="81" mass="9180">MLELHFEFIDLNQPKMYKFVVCLLTLSFLLLSGLSNTALARVHHESSNPKIGNRVWDQKIFNNVKVRVLPSASRRGPGQTG</sequence>
<organism>
    <name type="scientific">Arabidopsis thaliana</name>
    <name type="common">Mouse-ear cress</name>
    <dbReference type="NCBI Taxonomy" id="3702"/>
    <lineage>
        <taxon>Eukaryota</taxon>
        <taxon>Viridiplantae</taxon>
        <taxon>Streptophyta</taxon>
        <taxon>Embryophyta</taxon>
        <taxon>Tracheophyta</taxon>
        <taxon>Spermatophyta</taxon>
        <taxon>Magnoliopsida</taxon>
        <taxon>eudicotyledons</taxon>
        <taxon>Gunneridae</taxon>
        <taxon>Pentapetalae</taxon>
        <taxon>rosids</taxon>
        <taxon>malvids</taxon>
        <taxon>Brassicales</taxon>
        <taxon>Brassicaceae</taxon>
        <taxon>Camelineae</taxon>
        <taxon>Arabidopsis</taxon>
    </lineage>
</organism>
<name>SOP21_ARATH</name>
<feature type="signal peptide" evidence="2">
    <location>
        <begin position="1"/>
        <end position="40"/>
    </location>
</feature>
<feature type="propeptide" id="PRO_0000457254" description="Removed in mature form" evidence="1">
    <location>
        <begin position="41"/>
        <end status="unknown"/>
    </location>
</feature>
<feature type="peptide" id="PRO_0000457255" description="Serine rich endogenous peptide 21" evidence="1">
    <location>
        <begin status="unknown"/>
        <end position="81"/>
    </location>
</feature>
<feature type="short sequence motif" description="SCOOP motif" evidence="5">
    <location>
        <begin position="65"/>
        <end position="79"/>
    </location>
</feature>
<feature type="short sequence motif" description="SxS motif essential for MIK2 binding" evidence="1">
    <location>
        <begin position="71"/>
        <end position="73"/>
    </location>
</feature>
<comment type="function">
    <text evidence="1">Brassicaceae-specific phytocytokine (plant endogenous peptide released into the apoplast) perceived by MIK2 in a BAK1/SERK3 and SERK4 coreceptors-dependent manner, that modulates various physiological and antimicrobial processes including growth prevention and reactive oxygen species (ROS) response regulation.</text>
</comment>
<comment type="subunit">
    <text evidence="1">Interacts with MIK2 (via extracellular leucine-rich repeat domain); this interaction triggers the formation of complex between MIK2 and the BAK1/SERK3 and SERK4 coreceptors, and subsequent BAK1 activation by phosphorylation.</text>
</comment>
<comment type="subcellular location">
    <subcellularLocation>
        <location evidence="1">Cell membrane</location>
    </subcellularLocation>
    <subcellularLocation>
        <location evidence="1">Secreted</location>
        <location evidence="1">Extracellular space</location>
        <location evidence="1">Apoplast</location>
    </subcellularLocation>
    <text evidence="1">The precursor of SCOOP21, PROSCOOP21, accumulates at the plasma membrane and is proteolytically cleaved to release the SCOOP21 in the apoplasm.</text>
</comment>
<comment type="similarity">
    <text evidence="4">Belongs to the serine rich endogenous peptide (SCOOP) phytocytokine family.</text>
</comment>
<evidence type="ECO:0000250" key="1">
    <source>
        <dbReference type="UniProtKB" id="B3H7I1"/>
    </source>
</evidence>
<evidence type="ECO:0000255" key="2"/>
<evidence type="ECO:0000303" key="3">
    <source>
    </source>
</evidence>
<evidence type="ECO:0000305" key="4"/>
<evidence type="ECO:0000305" key="5">
    <source>
    </source>
</evidence>
<evidence type="ECO:0000312" key="6">
    <source>
        <dbReference type="Araport" id="AT2G24195"/>
    </source>
</evidence>
<evidence type="ECO:0000312" key="7">
    <source>
        <dbReference type="EMBL" id="AC005967"/>
    </source>
</evidence>
<proteinExistence type="inferred from homology"/>
<keyword id="KW-0052">Apoplast</keyword>
<keyword id="KW-1003">Cell membrane</keyword>
<keyword id="KW-0165">Cleavage on pair of basic residues</keyword>
<keyword id="KW-0472">Membrane</keyword>
<keyword id="KW-1185">Reference proteome</keyword>
<keyword id="KW-0964">Secreted</keyword>
<keyword id="KW-0732">Signal</keyword>
<gene>
    <name evidence="3" type="primary">PROSCOOP21</name>
    <name evidence="3" type="synonym">SCOOP21</name>
    <name evidence="6" type="ordered locus">At2g24195</name>
    <name evidence="7" type="ORF">F27D4</name>
</gene>
<reference key="1">
    <citation type="journal article" date="1999" name="Nature">
        <title>Sequence and analysis of chromosome 2 of the plant Arabidopsis thaliana.</title>
        <authorList>
            <person name="Lin X."/>
            <person name="Kaul S."/>
            <person name="Rounsley S.D."/>
            <person name="Shea T.P."/>
            <person name="Benito M.-I."/>
            <person name="Town C.D."/>
            <person name="Fujii C.Y."/>
            <person name="Mason T.M."/>
            <person name="Bowman C.L."/>
            <person name="Barnstead M.E."/>
            <person name="Feldblyum T.V."/>
            <person name="Buell C.R."/>
            <person name="Ketchum K.A."/>
            <person name="Lee J.J."/>
            <person name="Ronning C.M."/>
            <person name="Koo H.L."/>
            <person name="Moffat K.S."/>
            <person name="Cronin L.A."/>
            <person name="Shen M."/>
            <person name="Pai G."/>
            <person name="Van Aken S."/>
            <person name="Umayam L."/>
            <person name="Tallon L.J."/>
            <person name="Gill J.E."/>
            <person name="Adams M.D."/>
            <person name="Carrera A.J."/>
            <person name="Creasy T.H."/>
            <person name="Goodman H.M."/>
            <person name="Somerville C.R."/>
            <person name="Copenhaver G.P."/>
            <person name="Preuss D."/>
            <person name="Nierman W.C."/>
            <person name="White O."/>
            <person name="Eisen J.A."/>
            <person name="Salzberg S.L."/>
            <person name="Fraser C.M."/>
            <person name="Venter J.C."/>
        </authorList>
    </citation>
    <scope>NUCLEOTIDE SEQUENCE [LARGE SCALE GENOMIC DNA]</scope>
    <source>
        <strain>cv. Columbia</strain>
    </source>
</reference>
<reference key="2">
    <citation type="journal article" date="2017" name="Plant J.">
        <title>Araport11: a complete reannotation of the Arabidopsis thaliana reference genome.</title>
        <authorList>
            <person name="Cheng C.Y."/>
            <person name="Krishnakumar V."/>
            <person name="Chan A.P."/>
            <person name="Thibaud-Nissen F."/>
            <person name="Schobel S."/>
            <person name="Town C.D."/>
        </authorList>
    </citation>
    <scope>GENOME REANNOTATION</scope>
    <source>
        <strain>cv. Columbia</strain>
    </source>
</reference>
<reference key="3">
    <citation type="journal article" date="2019" name="J. Exp. Bot.">
        <title>The SCOOP12 peptide regulates defense response and root elongation in Arabidopsis thaliana.</title>
        <authorList>
            <person name="Gully K."/>
            <person name="Pelletier S."/>
            <person name="Guillou M.-C."/>
            <person name="Ferrand M."/>
            <person name="Aligon S."/>
            <person name="Pokotylo I."/>
            <person name="Perrin A."/>
            <person name="Vergne E."/>
            <person name="Fagard M."/>
            <person name="Ruelland E."/>
            <person name="Grappin P."/>
            <person name="Bucher E."/>
            <person name="Renou J.-P."/>
            <person name="Aubourg S."/>
        </authorList>
    </citation>
    <scope>GENE FAMILY</scope>
    <source>
        <strain>cv. Columbia</strain>
        <strain>cv. Wassilewskija</strain>
    </source>
</reference>
<reference key="4">
    <citation type="journal article" date="2021" name="Nat. Commun.">
        <title>The Arabidopsis MIK2 receptor elicits immunity by sensing a conserved signature from phytocytokines and microbes.</title>
        <authorList>
            <person name="Hou S."/>
            <person name="Liu D."/>
            <person name="Huang S."/>
            <person name="Luo D."/>
            <person name="Liu Z."/>
            <person name="Xiang Q."/>
            <person name="Wang P."/>
            <person name="Mu R."/>
            <person name="Han Z."/>
            <person name="Chen S."/>
            <person name="Chai J."/>
            <person name="Shan L."/>
            <person name="He P."/>
        </authorList>
    </citation>
    <scope>GENE FAMILY</scope>
    <scope>NOMENCLATURE</scope>
    <source>
        <strain>cv. Columbia</strain>
    </source>
</reference>